<name>PSBN_ANTAG</name>
<proteinExistence type="evidence at transcript level"/>
<organism>
    <name type="scientific">Anthoceros angustus</name>
    <name type="common">Hornwort</name>
    <name type="synonym">Anthoceros formosae</name>
    <dbReference type="NCBI Taxonomy" id="48387"/>
    <lineage>
        <taxon>Eukaryota</taxon>
        <taxon>Viridiplantae</taxon>
        <taxon>Streptophyta</taxon>
        <taxon>Embryophyta</taxon>
        <taxon>Anthocerotophyta</taxon>
        <taxon>Anthocerotopsida</taxon>
        <taxon>Anthocerotidae</taxon>
        <taxon>Anthocerotales</taxon>
        <taxon>Anthocerotaceae</taxon>
        <taxon>Anthoceros</taxon>
    </lineage>
</organism>
<evidence type="ECO:0000255" key="1">
    <source>
        <dbReference type="HAMAP-Rule" id="MF_00293"/>
    </source>
</evidence>
<keyword id="KW-0150">Chloroplast</keyword>
<keyword id="KW-0472">Membrane</keyword>
<keyword id="KW-0934">Plastid</keyword>
<keyword id="KW-0793">Thylakoid</keyword>
<keyword id="KW-0812">Transmembrane</keyword>
<keyword id="KW-1133">Transmembrane helix</keyword>
<gene>
    <name evidence="1" type="primary">psbN</name>
</gene>
<protein>
    <recommendedName>
        <fullName evidence="1">Protein PsbN</fullName>
    </recommendedName>
</protein>
<feature type="chain" id="PRO_0000207866" description="Protein PsbN">
    <location>
        <begin position="1"/>
        <end position="43"/>
    </location>
</feature>
<feature type="transmembrane region" description="Helical" evidence="1">
    <location>
        <begin position="5"/>
        <end position="27"/>
    </location>
</feature>
<dbReference type="EMBL" id="AB086179">
    <property type="protein sequence ID" value="BAC55376.1"/>
    <property type="molecule type" value="Genomic_DNA"/>
</dbReference>
<dbReference type="EMBL" id="AB087463">
    <property type="status" value="NOT_ANNOTATED_CDS"/>
    <property type="molecule type" value="mRNA"/>
</dbReference>
<dbReference type="RefSeq" id="NP_777440.1">
    <property type="nucleotide sequence ID" value="NC_004543.1"/>
</dbReference>
<dbReference type="SMR" id="Q85BG2"/>
<dbReference type="GeneID" id="2553408"/>
<dbReference type="GO" id="GO:0009535">
    <property type="term" value="C:chloroplast thylakoid membrane"/>
    <property type="evidence" value="ECO:0007669"/>
    <property type="project" value="UniProtKB-SubCell"/>
</dbReference>
<dbReference type="GO" id="GO:0015979">
    <property type="term" value="P:photosynthesis"/>
    <property type="evidence" value="ECO:0007669"/>
    <property type="project" value="InterPro"/>
</dbReference>
<dbReference type="HAMAP" id="MF_00293">
    <property type="entry name" value="PSII_PsbN"/>
    <property type="match status" value="1"/>
</dbReference>
<dbReference type="InterPro" id="IPR003398">
    <property type="entry name" value="PSII_PsbN"/>
</dbReference>
<dbReference type="PANTHER" id="PTHR35326">
    <property type="entry name" value="PROTEIN PSBN"/>
    <property type="match status" value="1"/>
</dbReference>
<dbReference type="PANTHER" id="PTHR35326:SF3">
    <property type="entry name" value="PROTEIN PSBN"/>
    <property type="match status" value="1"/>
</dbReference>
<dbReference type="Pfam" id="PF02468">
    <property type="entry name" value="PsbN"/>
    <property type="match status" value="1"/>
</dbReference>
<reference key="1">
    <citation type="journal article" date="2003" name="Nucleic Acids Res.">
        <title>The complete nucleotide sequence of the hornwort (Anthoceros formosae) chloroplast genome: insight into the earliest land plants.</title>
        <authorList>
            <person name="Kugita M."/>
            <person name="Kaneko A."/>
            <person name="Yamamoto Y."/>
            <person name="Takeya Y."/>
            <person name="Matsumoto T."/>
            <person name="Yoshinaga K."/>
        </authorList>
    </citation>
    <scope>NUCLEOTIDE SEQUENCE [LARGE SCALE GENOMIC DNA]</scope>
</reference>
<reference key="2">
    <citation type="journal article" date="2003" name="Nucleic Acids Res.">
        <title>RNA editing in hornwort chloroplasts makes more than half the genes functional.</title>
        <authorList>
            <person name="Kugita M."/>
            <person name="Yamamoto Y."/>
            <person name="Fujikawa T."/>
            <person name="Matsumoto T."/>
            <person name="Yoshinaga K."/>
        </authorList>
    </citation>
    <scope>NUCLEOTIDE SEQUENCE [MRNA]</scope>
    <scope>ABSENCE OF RNA EDITING</scope>
    <source>
        <tissue>Thallus</tissue>
    </source>
</reference>
<comment type="function">
    <text evidence="1">May play a role in photosystem I and II biogenesis.</text>
</comment>
<comment type="subcellular location">
    <subcellularLocation>
        <location evidence="1">Plastid</location>
        <location evidence="1">Chloroplast thylakoid membrane</location>
        <topology evidence="1">Single-pass membrane protein</topology>
    </subcellularLocation>
</comment>
<comment type="similarity">
    <text evidence="1">Belongs to the PsbN family.</text>
</comment>
<comment type="caution">
    <text evidence="1">Originally thought to be a component of PSII; based on experiments in Synechocystis, N.tabacum and barley, and its absence from PSII in T.elongatus and T.vulcanus, this is probably not true.</text>
</comment>
<geneLocation type="chloroplast"/>
<accession>Q85BG2</accession>
<sequence>METATLVAIFISCLLVSFTGYAPYTASGQPSNELRDLFEEHED</sequence>